<evidence type="ECO:0000255" key="1">
    <source>
        <dbReference type="HAMAP-Rule" id="MF_01331"/>
    </source>
</evidence>
<evidence type="ECO:0000305" key="2"/>
<proteinExistence type="inferred from homology"/>
<reference key="1">
    <citation type="journal article" date="2001" name="DNA Res.">
        <title>Complete genome sequence of an aerobic thermoacidophilic Crenarchaeon, Sulfolobus tokodaii strain7.</title>
        <authorList>
            <person name="Kawarabayasi Y."/>
            <person name="Hino Y."/>
            <person name="Horikawa H."/>
            <person name="Jin-no K."/>
            <person name="Takahashi M."/>
            <person name="Sekine M."/>
            <person name="Baba S."/>
            <person name="Ankai A."/>
            <person name="Kosugi H."/>
            <person name="Hosoyama A."/>
            <person name="Fukui S."/>
            <person name="Nagai Y."/>
            <person name="Nishijima K."/>
            <person name="Otsuka R."/>
            <person name="Nakazawa H."/>
            <person name="Takamiya M."/>
            <person name="Kato Y."/>
            <person name="Yoshizawa T."/>
            <person name="Tanaka T."/>
            <person name="Kudoh Y."/>
            <person name="Yamazaki J."/>
            <person name="Kushida N."/>
            <person name="Oguchi A."/>
            <person name="Aoki K."/>
            <person name="Masuda S."/>
            <person name="Yanagii M."/>
            <person name="Nishimura M."/>
            <person name="Yamagishi A."/>
            <person name="Oshima T."/>
            <person name="Kikuchi H."/>
        </authorList>
    </citation>
    <scope>NUCLEOTIDE SEQUENCE [LARGE SCALE GENOMIC DNA]</scope>
    <source>
        <strain>DSM 16993 / JCM 10545 / NBRC 100140 / 7</strain>
    </source>
</reference>
<organism>
    <name type="scientific">Sulfurisphaera tokodaii (strain DSM 16993 / JCM 10545 / NBRC 100140 / 7)</name>
    <name type="common">Sulfolobus tokodaii</name>
    <dbReference type="NCBI Taxonomy" id="273063"/>
    <lineage>
        <taxon>Archaea</taxon>
        <taxon>Thermoproteota</taxon>
        <taxon>Thermoprotei</taxon>
        <taxon>Sulfolobales</taxon>
        <taxon>Sulfolobaceae</taxon>
        <taxon>Sulfurisphaera</taxon>
    </lineage>
</organism>
<comment type="function">
    <text evidence="1">This protein binds specifically to 23S rRNA. It makes multiple contacts with different domains of the 23S rRNA in the assembled 50S subunit and ribosome.</text>
</comment>
<comment type="function">
    <text evidence="1">The globular domain of the protein is located near the polypeptide exit tunnel on the outside of the subunit, while an extended beta-hairpin is found that lines the wall of the exit tunnel in the center of the 70S ribosome.</text>
</comment>
<comment type="subunit">
    <text evidence="1">Part of the 50S ribosomal subunit.</text>
</comment>
<comment type="similarity">
    <text evidence="1">Belongs to the universal ribosomal protein uL22 family.</text>
</comment>
<keyword id="KW-1185">Reference proteome</keyword>
<keyword id="KW-0687">Ribonucleoprotein</keyword>
<keyword id="KW-0689">Ribosomal protein</keyword>
<keyword id="KW-0694">RNA-binding</keyword>
<keyword id="KW-0699">rRNA-binding</keyword>
<name>RL22_SULTO</name>
<feature type="chain" id="PRO_0000125289" description="Large ribosomal subunit protein uL22">
    <location>
        <begin position="1"/>
        <end position="156"/>
    </location>
</feature>
<accession>Q975I6</accession>
<dbReference type="EMBL" id="BA000023">
    <property type="protein sequence ID" value="BAB65414.1"/>
    <property type="molecule type" value="Genomic_DNA"/>
</dbReference>
<dbReference type="RefSeq" id="WP_010978397.1">
    <property type="nucleotide sequence ID" value="NC_003106.2"/>
</dbReference>
<dbReference type="SMR" id="Q975I6"/>
<dbReference type="STRING" id="273063.STK_04250"/>
<dbReference type="GeneID" id="1458361"/>
<dbReference type="KEGG" id="sto:STK_04250"/>
<dbReference type="PATRIC" id="fig|273063.9.peg.495"/>
<dbReference type="eggNOG" id="arCOG04098">
    <property type="taxonomic scope" value="Archaea"/>
</dbReference>
<dbReference type="OrthoDB" id="314984at2157"/>
<dbReference type="Proteomes" id="UP000001015">
    <property type="component" value="Chromosome"/>
</dbReference>
<dbReference type="GO" id="GO:0022625">
    <property type="term" value="C:cytosolic large ribosomal subunit"/>
    <property type="evidence" value="ECO:0007669"/>
    <property type="project" value="TreeGrafter"/>
</dbReference>
<dbReference type="GO" id="GO:0019843">
    <property type="term" value="F:rRNA binding"/>
    <property type="evidence" value="ECO:0007669"/>
    <property type="project" value="UniProtKB-UniRule"/>
</dbReference>
<dbReference type="GO" id="GO:0003735">
    <property type="term" value="F:structural constituent of ribosome"/>
    <property type="evidence" value="ECO:0007669"/>
    <property type="project" value="InterPro"/>
</dbReference>
<dbReference type="GO" id="GO:0002181">
    <property type="term" value="P:cytoplasmic translation"/>
    <property type="evidence" value="ECO:0007669"/>
    <property type="project" value="TreeGrafter"/>
</dbReference>
<dbReference type="CDD" id="cd00336">
    <property type="entry name" value="Ribosomal_L22"/>
    <property type="match status" value="1"/>
</dbReference>
<dbReference type="Gene3D" id="3.90.470.10">
    <property type="entry name" value="Ribosomal protein L22/L17"/>
    <property type="match status" value="1"/>
</dbReference>
<dbReference type="HAMAP" id="MF_01331_A">
    <property type="entry name" value="Ribosomal_uL22_A"/>
    <property type="match status" value="1"/>
</dbReference>
<dbReference type="InterPro" id="IPR001063">
    <property type="entry name" value="Ribosomal_uL22"/>
</dbReference>
<dbReference type="InterPro" id="IPR018260">
    <property type="entry name" value="Ribosomal_uL22_CS"/>
</dbReference>
<dbReference type="InterPro" id="IPR005721">
    <property type="entry name" value="Ribosomal_uL22_euk/arc"/>
</dbReference>
<dbReference type="InterPro" id="IPR036394">
    <property type="entry name" value="Ribosomal_uL22_sf"/>
</dbReference>
<dbReference type="NCBIfam" id="NF003260">
    <property type="entry name" value="PRK04223.1"/>
    <property type="match status" value="1"/>
</dbReference>
<dbReference type="NCBIfam" id="TIGR01038">
    <property type="entry name" value="uL22_arch_euk"/>
    <property type="match status" value="1"/>
</dbReference>
<dbReference type="PANTHER" id="PTHR11593">
    <property type="entry name" value="60S RIBOSOMAL PROTEIN L17"/>
    <property type="match status" value="1"/>
</dbReference>
<dbReference type="PANTHER" id="PTHR11593:SF10">
    <property type="entry name" value="60S RIBOSOMAL PROTEIN L17"/>
    <property type="match status" value="1"/>
</dbReference>
<dbReference type="Pfam" id="PF00237">
    <property type="entry name" value="Ribosomal_L22"/>
    <property type="match status" value="1"/>
</dbReference>
<dbReference type="SUPFAM" id="SSF54843">
    <property type="entry name" value="Ribosomal protein L22"/>
    <property type="match status" value="1"/>
</dbReference>
<dbReference type="PROSITE" id="PS00464">
    <property type="entry name" value="RIBOSOMAL_L22"/>
    <property type="match status" value="1"/>
</dbReference>
<protein>
    <recommendedName>
        <fullName evidence="1">Large ribosomal subunit protein uL22</fullName>
    </recommendedName>
    <alternativeName>
        <fullName evidence="2">50S ribosomal protein L22</fullName>
    </alternativeName>
</protein>
<sequence length="156" mass="17853">MAGWTYPKLDIDENKLAKAVIKNVPASIRDLYNVCKAIRGMKLNDAKQFLNNVLEEKEALPFWKHSHGASHRSNISPKWKVKSGRYPKKAIKYVLKVLENAENNANSKGLDLENVKIVHIAAHKGIILKRYMPRAFGRSTRKYRYTSHIEVILGEV</sequence>
<gene>
    <name evidence="1" type="primary">rpl22</name>
    <name type="ordered locus">STK_04250</name>
</gene>